<sequence>MAEVSGAALSQAGWYLSDEGVEACTSSPGKGSINDIILIALNTDLRTIGKKFLPSDINGGKVEKLEGPCVLQIQKVRNVAAPKDNEESQAAPRMLRVQMTDGHTSCTAVEFSYISKISLNTPPGTKVKLSGTVDIKNGFLLLSDSNTTVLGGEVEHLIDKWALQRSLLKHNRSNIGAEGGPPPFLPFGQKCASNVQVDSRELDRRKTLQVSLPAKPANDNDEFEKQRTAAIAEVAKSKETKTFGGGGGGARSNLNIGAAGHRNREVLQKEKASKSESKNEGVYRELVDEKALKHITEMGFSKEASRQALMDNANNLEAALNVLLNSSKQKPAVGPPARGRGKGRGRGRSEDEEDLGTARPSAPSTLFDFLESKMGTLNVEEPKSQPQHLHQGQHRGWNAEQNGMKDGTQSRHLPRNDTRQPRNERPPRFQKDTPTSKSTVENSVLSRNRGSERPSSSSGSDVWAEERIKCDRPYSRYDRTKDASHPLGLQHNDGAFKKRENSMQNRPGRGPLYAEAKENPLPPEFVDYNNQRRGRRENQTGHPDHCYERKPRTMNSEAVSGLKIEKHFSVNTDYPRPVQSNSLGVPNGETAPPLKGRRVGPIKSAGPVTAVPYDDKIFYNSGPKRRSGPIKPEKVIESSIPVEYAKVWKPGDECFALYWEDNKFYRAEVEALHSSGMTAVVKFTDYGNYEEVLLSNIKPVQTEAWEEEGTYDHTIEFRRGGDGQPRRSTRPTQQFYQPPRARN</sequence>
<evidence type="ECO:0000250" key="1"/>
<evidence type="ECO:0000250" key="2">
    <source>
        <dbReference type="UniProtKB" id="Q9H7E2"/>
    </source>
</evidence>
<evidence type="ECO:0000255" key="3">
    <source>
        <dbReference type="PROSITE-ProRule" id="PRU00211"/>
    </source>
</evidence>
<evidence type="ECO:0000255" key="4">
    <source>
        <dbReference type="PROSITE-ProRule" id="PRU00212"/>
    </source>
</evidence>
<evidence type="ECO:0000256" key="5">
    <source>
        <dbReference type="SAM" id="MobiDB-lite"/>
    </source>
</evidence>
<evidence type="ECO:0000303" key="6">
    <source>
    </source>
</evidence>
<evidence type="ECO:0000303" key="7">
    <source>
    </source>
</evidence>
<evidence type="ECO:0000305" key="8"/>
<evidence type="ECO:0007744" key="9">
    <source>
    </source>
</evidence>
<evidence type="ECO:0007829" key="10">
    <source>
        <dbReference type="PDB" id="2D9T"/>
    </source>
</evidence>
<name>TDRD3_MOUSE</name>
<keyword id="KW-0002">3D-structure</keyword>
<keyword id="KW-0025">Alternative splicing</keyword>
<keyword id="KW-0156">Chromatin regulator</keyword>
<keyword id="KW-0963">Cytoplasm</keyword>
<keyword id="KW-1017">Isopeptide bond</keyword>
<keyword id="KW-0539">Nucleus</keyword>
<keyword id="KW-0597">Phosphoprotein</keyword>
<keyword id="KW-1185">Reference proteome</keyword>
<keyword id="KW-0832">Ubl conjugation</keyword>
<feature type="chain" id="PRO_0000183164" description="Tudor domain-containing protein 3">
    <location>
        <begin position="1"/>
        <end position="743"/>
    </location>
</feature>
<feature type="domain" description="UBA" evidence="4">
    <location>
        <begin position="286"/>
        <end position="326"/>
    </location>
</feature>
<feature type="domain" description="Tudor" evidence="3">
    <location>
        <begin position="647"/>
        <end position="707"/>
    </location>
</feature>
<feature type="region of interest" description="Disordered" evidence="5">
    <location>
        <begin position="241"/>
        <end position="262"/>
    </location>
</feature>
<feature type="region of interest" description="Disordered" evidence="5">
    <location>
        <begin position="327"/>
        <end position="365"/>
    </location>
</feature>
<feature type="region of interest" description="Disordered" evidence="5">
    <location>
        <begin position="380"/>
        <end position="549"/>
    </location>
</feature>
<feature type="region of interest" description="Disordered" evidence="5">
    <location>
        <begin position="572"/>
        <end position="603"/>
    </location>
</feature>
<feature type="region of interest" description="Disordered" evidence="5">
    <location>
        <begin position="711"/>
        <end position="743"/>
    </location>
</feature>
<feature type="region of interest" description="EBM motif; may mediate interaction with the EJC" evidence="1">
    <location>
        <begin position="723"/>
        <end position="743"/>
    </location>
</feature>
<feature type="compositionally biased region" description="Basic and acidic residues" evidence="5">
    <location>
        <begin position="414"/>
        <end position="431"/>
    </location>
</feature>
<feature type="compositionally biased region" description="Polar residues" evidence="5">
    <location>
        <begin position="432"/>
        <end position="445"/>
    </location>
</feature>
<feature type="compositionally biased region" description="Basic and acidic residues" evidence="5">
    <location>
        <begin position="464"/>
        <end position="484"/>
    </location>
</feature>
<feature type="compositionally biased region" description="Basic and acidic residues" evidence="5">
    <location>
        <begin position="536"/>
        <end position="549"/>
    </location>
</feature>
<feature type="compositionally biased region" description="Basic and acidic residues" evidence="5">
    <location>
        <begin position="711"/>
        <end position="725"/>
    </location>
</feature>
<feature type="modified residue" description="Phosphoserine" evidence="9">
    <location>
        <position position="349"/>
    </location>
</feature>
<feature type="modified residue" description="Phosphoserine" evidence="2">
    <location>
        <position position="438"/>
    </location>
</feature>
<feature type="cross-link" description="Glycyl lysine isopeptide (Lys-Gly) (interchain with G-Cter in SUMO2)" evidence="2">
    <location>
        <position position="563"/>
    </location>
</feature>
<feature type="splice variant" id="VSP_037054" description="In isoform 3." evidence="6">
    <original>MAEVSGAALSQAGW</original>
    <variation>MLFILFNR</variation>
    <location>
        <begin position="1"/>
        <end position="14"/>
    </location>
</feature>
<feature type="splice variant" id="VSP_034485" description="In isoform 2." evidence="7">
    <original>EEEGTYDHTIEFRRGGDGQPRRSTRPTQQFYQPPRARN</original>
    <variation>VRDPNSVQRLL</variation>
    <location>
        <begin position="706"/>
        <end position="743"/>
    </location>
</feature>
<feature type="sequence conflict" description="In Ref. 1; BAC28263." evidence="8" ref="1">
    <original>A</original>
    <variation>G</variation>
    <location>
        <position position="8"/>
    </location>
</feature>
<feature type="sequence conflict" description="In Ref. 3; AAH66144." evidence="8" ref="3">
    <original>I</original>
    <variation>V</variation>
    <location>
        <position position="57"/>
    </location>
</feature>
<feature type="sequence conflict" description="In Ref. 1; BAC28263." evidence="8" ref="1">
    <original>E</original>
    <variation>V</variation>
    <location>
        <position position="350"/>
    </location>
</feature>
<feature type="sequence conflict" description="In Ref. 3; AAH66144." evidence="8" ref="3">
    <original>T</original>
    <variation>M</variation>
    <location>
        <position position="365"/>
    </location>
</feature>
<feature type="sequence conflict" description="In Ref. 3; AAH66144." evidence="8" ref="3">
    <original>G</original>
    <variation>R</variation>
    <location>
        <position position="375"/>
    </location>
</feature>
<feature type="sequence conflict" description="In Ref. 3; AAH05670." evidence="8" ref="3">
    <original>T</original>
    <variation>S</variation>
    <location>
        <position position="408"/>
    </location>
</feature>
<feature type="sequence conflict" description="In Ref. 3; AAH05670." evidence="8" ref="3">
    <original>K</original>
    <variation>R</variation>
    <location>
        <position position="469"/>
    </location>
</feature>
<feature type="sequence conflict" description="In Ref. 3; AAH05670." evidence="8" ref="3">
    <original>L</original>
    <variation>F</variation>
    <location>
        <position position="489"/>
    </location>
</feature>
<feature type="sequence conflict" description="In Ref. 3; AAH05670." evidence="8" ref="3">
    <original>V</original>
    <variation>F</variation>
    <location>
        <position position="559"/>
    </location>
</feature>
<feature type="sequence conflict" description="In Ref. 3; AAH05670." evidence="8" ref="3">
    <original>R</original>
    <variation>S</variation>
    <location>
        <position position="576"/>
    </location>
</feature>
<feature type="sequence conflict" description="In Ref. 1; BAC28263." evidence="8" ref="1">
    <original>A</original>
    <variation>E</variation>
    <location>
        <position position="679"/>
    </location>
</feature>
<feature type="sequence conflict" description="In Ref. 3; AAH66144." evidence="8" ref="3">
    <original>F</original>
    <variation>L</variation>
    <location>
        <position position="717"/>
    </location>
</feature>
<feature type="strand" evidence="10">
    <location>
        <begin position="653"/>
        <end position="657"/>
    </location>
</feature>
<feature type="turn" evidence="10">
    <location>
        <begin position="659"/>
        <end position="661"/>
    </location>
</feature>
<feature type="strand" evidence="10">
    <location>
        <begin position="664"/>
        <end position="672"/>
    </location>
</feature>
<feature type="strand" evidence="10">
    <location>
        <begin position="674"/>
        <end position="683"/>
    </location>
</feature>
<feature type="turn" evidence="10">
    <location>
        <begin position="684"/>
        <end position="686"/>
    </location>
</feature>
<feature type="strand" evidence="10">
    <location>
        <begin position="689"/>
        <end position="693"/>
    </location>
</feature>
<feature type="helix" evidence="10">
    <location>
        <begin position="694"/>
        <end position="696"/>
    </location>
</feature>
<feature type="strand" evidence="10">
    <location>
        <begin position="697"/>
        <end position="699"/>
    </location>
</feature>
<organism>
    <name type="scientific">Mus musculus</name>
    <name type="common">Mouse</name>
    <dbReference type="NCBI Taxonomy" id="10090"/>
    <lineage>
        <taxon>Eukaryota</taxon>
        <taxon>Metazoa</taxon>
        <taxon>Chordata</taxon>
        <taxon>Craniata</taxon>
        <taxon>Vertebrata</taxon>
        <taxon>Euteleostomi</taxon>
        <taxon>Mammalia</taxon>
        <taxon>Eutheria</taxon>
        <taxon>Euarchontoglires</taxon>
        <taxon>Glires</taxon>
        <taxon>Rodentia</taxon>
        <taxon>Myomorpha</taxon>
        <taxon>Muroidea</taxon>
        <taxon>Muridae</taxon>
        <taxon>Murinae</taxon>
        <taxon>Mus</taxon>
        <taxon>Mus</taxon>
    </lineage>
</organism>
<accession>Q91W18</accession>
<accession>E9Q2Q4</accession>
<accession>Q6NZG7</accession>
<accession>Q8BZW6</accession>
<accession>Q8C1A4</accession>
<reference key="1">
    <citation type="journal article" date="2005" name="Science">
        <title>The transcriptional landscape of the mammalian genome.</title>
        <authorList>
            <person name="Carninci P."/>
            <person name="Kasukawa T."/>
            <person name="Katayama S."/>
            <person name="Gough J."/>
            <person name="Frith M.C."/>
            <person name="Maeda N."/>
            <person name="Oyama R."/>
            <person name="Ravasi T."/>
            <person name="Lenhard B."/>
            <person name="Wells C."/>
            <person name="Kodzius R."/>
            <person name="Shimokawa K."/>
            <person name="Bajic V.B."/>
            <person name="Brenner S.E."/>
            <person name="Batalov S."/>
            <person name="Forrest A.R."/>
            <person name="Zavolan M."/>
            <person name="Davis M.J."/>
            <person name="Wilming L.G."/>
            <person name="Aidinis V."/>
            <person name="Allen J.E."/>
            <person name="Ambesi-Impiombato A."/>
            <person name="Apweiler R."/>
            <person name="Aturaliya R.N."/>
            <person name="Bailey T.L."/>
            <person name="Bansal M."/>
            <person name="Baxter L."/>
            <person name="Beisel K.W."/>
            <person name="Bersano T."/>
            <person name="Bono H."/>
            <person name="Chalk A.M."/>
            <person name="Chiu K.P."/>
            <person name="Choudhary V."/>
            <person name="Christoffels A."/>
            <person name="Clutterbuck D.R."/>
            <person name="Crowe M.L."/>
            <person name="Dalla E."/>
            <person name="Dalrymple B.P."/>
            <person name="de Bono B."/>
            <person name="Della Gatta G."/>
            <person name="di Bernardo D."/>
            <person name="Down T."/>
            <person name="Engstrom P."/>
            <person name="Fagiolini M."/>
            <person name="Faulkner G."/>
            <person name="Fletcher C.F."/>
            <person name="Fukushima T."/>
            <person name="Furuno M."/>
            <person name="Futaki S."/>
            <person name="Gariboldi M."/>
            <person name="Georgii-Hemming P."/>
            <person name="Gingeras T.R."/>
            <person name="Gojobori T."/>
            <person name="Green R.E."/>
            <person name="Gustincich S."/>
            <person name="Harbers M."/>
            <person name="Hayashi Y."/>
            <person name="Hensch T.K."/>
            <person name="Hirokawa N."/>
            <person name="Hill D."/>
            <person name="Huminiecki L."/>
            <person name="Iacono M."/>
            <person name="Ikeo K."/>
            <person name="Iwama A."/>
            <person name="Ishikawa T."/>
            <person name="Jakt M."/>
            <person name="Kanapin A."/>
            <person name="Katoh M."/>
            <person name="Kawasawa Y."/>
            <person name="Kelso J."/>
            <person name="Kitamura H."/>
            <person name="Kitano H."/>
            <person name="Kollias G."/>
            <person name="Krishnan S.P."/>
            <person name="Kruger A."/>
            <person name="Kummerfeld S.K."/>
            <person name="Kurochkin I.V."/>
            <person name="Lareau L.F."/>
            <person name="Lazarevic D."/>
            <person name="Lipovich L."/>
            <person name="Liu J."/>
            <person name="Liuni S."/>
            <person name="McWilliam S."/>
            <person name="Madan Babu M."/>
            <person name="Madera M."/>
            <person name="Marchionni L."/>
            <person name="Matsuda H."/>
            <person name="Matsuzawa S."/>
            <person name="Miki H."/>
            <person name="Mignone F."/>
            <person name="Miyake S."/>
            <person name="Morris K."/>
            <person name="Mottagui-Tabar S."/>
            <person name="Mulder N."/>
            <person name="Nakano N."/>
            <person name="Nakauchi H."/>
            <person name="Ng P."/>
            <person name="Nilsson R."/>
            <person name="Nishiguchi S."/>
            <person name="Nishikawa S."/>
            <person name="Nori F."/>
            <person name="Ohara O."/>
            <person name="Okazaki Y."/>
            <person name="Orlando V."/>
            <person name="Pang K.C."/>
            <person name="Pavan W.J."/>
            <person name="Pavesi G."/>
            <person name="Pesole G."/>
            <person name="Petrovsky N."/>
            <person name="Piazza S."/>
            <person name="Reed J."/>
            <person name="Reid J.F."/>
            <person name="Ring B.Z."/>
            <person name="Ringwald M."/>
            <person name="Rost B."/>
            <person name="Ruan Y."/>
            <person name="Salzberg S.L."/>
            <person name="Sandelin A."/>
            <person name="Schneider C."/>
            <person name="Schoenbach C."/>
            <person name="Sekiguchi K."/>
            <person name="Semple C.A."/>
            <person name="Seno S."/>
            <person name="Sessa L."/>
            <person name="Sheng Y."/>
            <person name="Shibata Y."/>
            <person name="Shimada H."/>
            <person name="Shimada K."/>
            <person name="Silva D."/>
            <person name="Sinclair B."/>
            <person name="Sperling S."/>
            <person name="Stupka E."/>
            <person name="Sugiura K."/>
            <person name="Sultana R."/>
            <person name="Takenaka Y."/>
            <person name="Taki K."/>
            <person name="Tammoja K."/>
            <person name="Tan S.L."/>
            <person name="Tang S."/>
            <person name="Taylor M.S."/>
            <person name="Tegner J."/>
            <person name="Teichmann S.A."/>
            <person name="Ueda H.R."/>
            <person name="van Nimwegen E."/>
            <person name="Verardo R."/>
            <person name="Wei C.L."/>
            <person name="Yagi K."/>
            <person name="Yamanishi H."/>
            <person name="Zabarovsky E."/>
            <person name="Zhu S."/>
            <person name="Zimmer A."/>
            <person name="Hide W."/>
            <person name="Bult C."/>
            <person name="Grimmond S.M."/>
            <person name="Teasdale R.D."/>
            <person name="Liu E.T."/>
            <person name="Brusic V."/>
            <person name="Quackenbush J."/>
            <person name="Wahlestedt C."/>
            <person name="Mattick J.S."/>
            <person name="Hume D.A."/>
            <person name="Kai C."/>
            <person name="Sasaki D."/>
            <person name="Tomaru Y."/>
            <person name="Fukuda S."/>
            <person name="Kanamori-Katayama M."/>
            <person name="Suzuki M."/>
            <person name="Aoki J."/>
            <person name="Arakawa T."/>
            <person name="Iida J."/>
            <person name="Imamura K."/>
            <person name="Itoh M."/>
            <person name="Kato T."/>
            <person name="Kawaji H."/>
            <person name="Kawagashira N."/>
            <person name="Kawashima T."/>
            <person name="Kojima M."/>
            <person name="Kondo S."/>
            <person name="Konno H."/>
            <person name="Nakano K."/>
            <person name="Ninomiya N."/>
            <person name="Nishio T."/>
            <person name="Okada M."/>
            <person name="Plessy C."/>
            <person name="Shibata K."/>
            <person name="Shiraki T."/>
            <person name="Suzuki S."/>
            <person name="Tagami M."/>
            <person name="Waki K."/>
            <person name="Watahiki A."/>
            <person name="Okamura-Oho Y."/>
            <person name="Suzuki H."/>
            <person name="Kawai J."/>
            <person name="Hayashizaki Y."/>
        </authorList>
    </citation>
    <scope>NUCLEOTIDE SEQUENCE [LARGE SCALE MRNA] (ISOFORM 1)</scope>
    <scope>NUCLEOTIDE SEQUENCE [LARGE SCALE MRNA] OF 545-743 (ISOFORM 2)</scope>
    <source>
        <strain>C57BL/6J</strain>
        <tissue>Lung</tissue>
        <tissue>Skin</tissue>
    </source>
</reference>
<reference key="2">
    <citation type="journal article" date="2009" name="PLoS Biol.">
        <title>Lineage-specific biology revealed by a finished genome assembly of the mouse.</title>
        <authorList>
            <person name="Church D.M."/>
            <person name="Goodstadt L."/>
            <person name="Hillier L.W."/>
            <person name="Zody M.C."/>
            <person name="Goldstein S."/>
            <person name="She X."/>
            <person name="Bult C.J."/>
            <person name="Agarwala R."/>
            <person name="Cherry J.L."/>
            <person name="DiCuccio M."/>
            <person name="Hlavina W."/>
            <person name="Kapustin Y."/>
            <person name="Meric P."/>
            <person name="Maglott D."/>
            <person name="Birtle Z."/>
            <person name="Marques A.C."/>
            <person name="Graves T."/>
            <person name="Zhou S."/>
            <person name="Teague B."/>
            <person name="Potamousis K."/>
            <person name="Churas C."/>
            <person name="Place M."/>
            <person name="Herschleb J."/>
            <person name="Runnheim R."/>
            <person name="Forrest D."/>
            <person name="Amos-Landgraf J."/>
            <person name="Schwartz D.C."/>
            <person name="Cheng Z."/>
            <person name="Lindblad-Toh K."/>
            <person name="Eichler E.E."/>
            <person name="Ponting C.P."/>
        </authorList>
    </citation>
    <scope>NUCLEOTIDE SEQUENCE [LARGE SCALE GENOMIC DNA]</scope>
    <source>
        <strain>C57BL/6J</strain>
    </source>
</reference>
<reference key="3">
    <citation type="journal article" date="2004" name="Genome Res.">
        <title>The status, quality, and expansion of the NIH full-length cDNA project: the Mammalian Gene Collection (MGC).</title>
        <authorList>
            <consortium name="The MGC Project Team"/>
        </authorList>
    </citation>
    <scope>NUCLEOTIDE SEQUENCE [LARGE SCALE MRNA] (ISOFORMS 1 AND 3)</scope>
    <source>
        <strain>C57BL/6J</strain>
        <tissue>Embryo</tissue>
        <tissue>Mammary tumor</tissue>
    </source>
</reference>
<reference key="4">
    <citation type="journal article" date="2010" name="Cell">
        <title>A tissue-specific atlas of mouse protein phosphorylation and expression.</title>
        <authorList>
            <person name="Huttlin E.L."/>
            <person name="Jedrychowski M.P."/>
            <person name="Elias J.E."/>
            <person name="Goswami T."/>
            <person name="Rad R."/>
            <person name="Beausoleil S.A."/>
            <person name="Villen J."/>
            <person name="Haas W."/>
            <person name="Sowa M.E."/>
            <person name="Gygi S.P."/>
        </authorList>
    </citation>
    <scope>PHOSPHORYLATION [LARGE SCALE ANALYSIS] AT SER-349</scope>
    <scope>IDENTIFICATION BY MASS SPECTROMETRY [LARGE SCALE ANALYSIS]</scope>
    <source>
        <tissue>Kidney</tissue>
        <tissue>Lung</tissue>
        <tissue>Pancreas</tissue>
    </source>
</reference>
<reference key="5">
    <citation type="submission" date="2006-06" db="PDB data bank">
        <title>Solution structure of the Tudor domain of Tudor domain containing protein 3 from mouse.</title>
        <authorList>
            <consortium name="RIKEN structural genomics initiative (RSGI)"/>
        </authorList>
    </citation>
    <scope>STRUCTURE BY NMR OF 646-699</scope>
</reference>
<dbReference type="EMBL" id="AK028617">
    <property type="protein sequence ID" value="BAC26033.1"/>
    <property type="status" value="ALT_INIT"/>
    <property type="molecule type" value="mRNA"/>
</dbReference>
<dbReference type="EMBL" id="AK033390">
    <property type="protein sequence ID" value="BAC28263.1"/>
    <property type="status" value="ALT_INIT"/>
    <property type="molecule type" value="mRNA"/>
</dbReference>
<dbReference type="EMBL" id="AC154562">
    <property type="status" value="NOT_ANNOTATED_CDS"/>
    <property type="molecule type" value="Genomic_DNA"/>
</dbReference>
<dbReference type="EMBL" id="CT010453">
    <property type="status" value="NOT_ANNOTATED_CDS"/>
    <property type="molecule type" value="Genomic_DNA"/>
</dbReference>
<dbReference type="EMBL" id="BC005670">
    <property type="protein sequence ID" value="AAH05670.3"/>
    <property type="status" value="ALT_INIT"/>
    <property type="molecule type" value="mRNA"/>
</dbReference>
<dbReference type="EMBL" id="BC066144">
    <property type="protein sequence ID" value="AAH66144.1"/>
    <property type="status" value="ALT_INIT"/>
    <property type="molecule type" value="mRNA"/>
</dbReference>
<dbReference type="CCDS" id="CCDS27305.2">
    <molecule id="Q91W18-1"/>
</dbReference>
<dbReference type="CCDS" id="CCDS56972.1">
    <molecule id="Q91W18-2"/>
</dbReference>
<dbReference type="RefSeq" id="NP_001240684.1">
    <molecule id="Q91W18-2"/>
    <property type="nucleotide sequence ID" value="NM_001253755.1"/>
</dbReference>
<dbReference type="RefSeq" id="NP_766193.3">
    <molecule id="Q91W18-1"/>
    <property type="nucleotide sequence ID" value="NM_172605.3"/>
</dbReference>
<dbReference type="PDB" id="2D9T">
    <property type="method" value="NMR"/>
    <property type="chains" value="A=646-705"/>
</dbReference>
<dbReference type="PDBsum" id="2D9T"/>
<dbReference type="BMRB" id="Q91W18"/>
<dbReference type="SMR" id="Q91W18"/>
<dbReference type="BioGRID" id="230129">
    <property type="interactions" value="14"/>
</dbReference>
<dbReference type="ComplexPortal" id="CPX-3302">
    <molecule id="Q91W18-1"/>
    <property type="entry name" value="TDRD3-TOP3B type IA topoisomerase complex"/>
</dbReference>
<dbReference type="FunCoup" id="Q91W18">
    <property type="interactions" value="3903"/>
</dbReference>
<dbReference type="IntAct" id="Q91W18">
    <property type="interactions" value="5"/>
</dbReference>
<dbReference type="MINT" id="Q91W18"/>
<dbReference type="STRING" id="10090.ENSMUSP00000129019"/>
<dbReference type="iPTMnet" id="Q91W18"/>
<dbReference type="PhosphoSitePlus" id="Q91W18"/>
<dbReference type="SwissPalm" id="Q91W18"/>
<dbReference type="jPOST" id="Q91W18"/>
<dbReference type="PaxDb" id="10090-ENSMUSP00000129019"/>
<dbReference type="PeptideAtlas" id="Q91W18"/>
<dbReference type="ProteomicsDB" id="262744">
    <molecule id="Q91W18-1"/>
</dbReference>
<dbReference type="ProteomicsDB" id="262745">
    <molecule id="Q91W18-2"/>
</dbReference>
<dbReference type="ProteomicsDB" id="262746">
    <molecule id="Q91W18-3"/>
</dbReference>
<dbReference type="Pumba" id="Q91W18"/>
<dbReference type="Antibodypedia" id="24335">
    <property type="antibodies" value="156 antibodies from 23 providers"/>
</dbReference>
<dbReference type="DNASU" id="219249"/>
<dbReference type="Ensembl" id="ENSMUST00000168275.9">
    <molecule id="Q91W18-1"/>
    <property type="protein sequence ID" value="ENSMUSP00000129019.2"/>
    <property type="gene ID" value="ENSMUSG00000022019.17"/>
</dbReference>
<dbReference type="Ensembl" id="ENSMUST00000169504.8">
    <molecule id="Q91W18-2"/>
    <property type="protein sequence ID" value="ENSMUSP00000131542.2"/>
    <property type="gene ID" value="ENSMUSG00000022019.17"/>
</dbReference>
<dbReference type="Ensembl" id="ENSMUST00000170865.8">
    <molecule id="Q91W18-3"/>
    <property type="protein sequence ID" value="ENSMUSP00000126189.2"/>
    <property type="gene ID" value="ENSMUSG00000022019.17"/>
</dbReference>
<dbReference type="GeneID" id="219249"/>
<dbReference type="KEGG" id="mmu:219249"/>
<dbReference type="UCSC" id="uc007uuf.3">
    <molecule id="Q91W18-2"/>
    <property type="organism name" value="mouse"/>
</dbReference>
<dbReference type="UCSC" id="uc007uug.2">
    <molecule id="Q91W18-1"/>
    <property type="organism name" value="mouse"/>
</dbReference>
<dbReference type="UCSC" id="uc011zpb.1">
    <molecule id="Q91W18-3"/>
    <property type="organism name" value="mouse"/>
</dbReference>
<dbReference type="AGR" id="MGI:2444023"/>
<dbReference type="CTD" id="81550"/>
<dbReference type="MGI" id="MGI:2444023">
    <property type="gene designation" value="Tdrd3"/>
</dbReference>
<dbReference type="VEuPathDB" id="HostDB:ENSMUSG00000022019"/>
<dbReference type="eggNOG" id="KOG3683">
    <property type="taxonomic scope" value="Eukaryota"/>
</dbReference>
<dbReference type="GeneTree" id="ENSGT00940000155487"/>
<dbReference type="HOGENOM" id="CLU_022646_0_0_1"/>
<dbReference type="InParanoid" id="Q91W18"/>
<dbReference type="OMA" id="GGHDKPN"/>
<dbReference type="OrthoDB" id="434939at2759"/>
<dbReference type="PhylomeDB" id="Q91W18"/>
<dbReference type="TreeFam" id="TF316491"/>
<dbReference type="BioGRID-ORCS" id="219249">
    <property type="hits" value="4 hits in 84 CRISPR screens"/>
</dbReference>
<dbReference type="CD-CODE" id="DE1E139C">
    <property type="entry name" value="Chromatoid body"/>
</dbReference>
<dbReference type="ChiTaRS" id="Tdrd3">
    <property type="organism name" value="mouse"/>
</dbReference>
<dbReference type="EvolutionaryTrace" id="Q91W18"/>
<dbReference type="PRO" id="PR:Q91W18"/>
<dbReference type="Proteomes" id="UP000000589">
    <property type="component" value="Chromosome 14"/>
</dbReference>
<dbReference type="RNAct" id="Q91W18">
    <property type="molecule type" value="protein"/>
</dbReference>
<dbReference type="Bgee" id="ENSMUSG00000022019">
    <property type="expression patterns" value="Expressed in humerus cartilage element and 247 other cell types or tissues"/>
</dbReference>
<dbReference type="ExpressionAtlas" id="Q91W18">
    <property type="expression patterns" value="baseline and differential"/>
</dbReference>
<dbReference type="GO" id="GO:0005829">
    <property type="term" value="C:cytosol"/>
    <property type="evidence" value="ECO:0007669"/>
    <property type="project" value="Ensembl"/>
</dbReference>
<dbReference type="GO" id="GO:0140225">
    <property type="term" value="C:DNA topoisomerase III-beta-TDRD3 complex"/>
    <property type="evidence" value="ECO:0000303"/>
    <property type="project" value="ComplexPortal"/>
</dbReference>
<dbReference type="GO" id="GO:0035145">
    <property type="term" value="C:exon-exon junction complex"/>
    <property type="evidence" value="ECO:0007669"/>
    <property type="project" value="Ensembl"/>
</dbReference>
<dbReference type="GO" id="GO:0005794">
    <property type="term" value="C:Golgi apparatus"/>
    <property type="evidence" value="ECO:0007669"/>
    <property type="project" value="Ensembl"/>
</dbReference>
<dbReference type="GO" id="GO:0005654">
    <property type="term" value="C:nucleoplasm"/>
    <property type="evidence" value="ECO:0007669"/>
    <property type="project" value="Ensembl"/>
</dbReference>
<dbReference type="GO" id="GO:0005634">
    <property type="term" value="C:nucleus"/>
    <property type="evidence" value="ECO:0000266"/>
    <property type="project" value="ComplexPortal"/>
</dbReference>
<dbReference type="GO" id="GO:0003682">
    <property type="term" value="F:chromatin binding"/>
    <property type="evidence" value="ECO:0000250"/>
    <property type="project" value="UniProtKB"/>
</dbReference>
<dbReference type="GO" id="GO:0140006">
    <property type="term" value="F:histone H3 reader activity"/>
    <property type="evidence" value="ECO:0000250"/>
    <property type="project" value="UniProtKB"/>
</dbReference>
<dbReference type="GO" id="GO:0140008">
    <property type="term" value="F:histone H4 reader activity"/>
    <property type="evidence" value="ECO:0007669"/>
    <property type="project" value="Ensembl"/>
</dbReference>
<dbReference type="GO" id="GO:0003713">
    <property type="term" value="F:transcription coactivator activity"/>
    <property type="evidence" value="ECO:0000250"/>
    <property type="project" value="UniProtKB"/>
</dbReference>
<dbReference type="GO" id="GO:0006265">
    <property type="term" value="P:DNA topological change"/>
    <property type="evidence" value="ECO:0000303"/>
    <property type="project" value="ComplexPortal"/>
</dbReference>
<dbReference type="CDD" id="cd20413">
    <property type="entry name" value="Tudor_TDRD3"/>
    <property type="match status" value="1"/>
</dbReference>
<dbReference type="CDD" id="cd14282">
    <property type="entry name" value="UBA_TDRD3"/>
    <property type="match status" value="1"/>
</dbReference>
<dbReference type="FunFam" id="2.40.50.770:FF:000001">
    <property type="entry name" value="Tudor domain-containing protein 3"/>
    <property type="match status" value="1"/>
</dbReference>
<dbReference type="FunFam" id="1.10.8.10:FF:000038">
    <property type="entry name" value="tudor domain-containing protein 3 isoform X1"/>
    <property type="match status" value="1"/>
</dbReference>
<dbReference type="FunFam" id="2.30.30.140:FF:000046">
    <property type="entry name" value="tudor domain-containing protein 3 isoform X1"/>
    <property type="match status" value="1"/>
</dbReference>
<dbReference type="Gene3D" id="2.30.30.140">
    <property type="match status" value="1"/>
</dbReference>
<dbReference type="Gene3D" id="1.10.8.10">
    <property type="entry name" value="DNA helicase RuvA subunit, C-terminal domain"/>
    <property type="match status" value="1"/>
</dbReference>
<dbReference type="Gene3D" id="2.40.50.770">
    <property type="entry name" value="RecQ-mediated genome instability protein Rmi1, C-terminal domain"/>
    <property type="match status" value="1"/>
</dbReference>
<dbReference type="InterPro" id="IPR042470">
    <property type="entry name" value="RMI1_N_C_sf"/>
</dbReference>
<dbReference type="InterPro" id="IPR013894">
    <property type="entry name" value="RMI1_OB"/>
</dbReference>
<dbReference type="InterPro" id="IPR002999">
    <property type="entry name" value="Tudor"/>
</dbReference>
<dbReference type="InterPro" id="IPR047379">
    <property type="entry name" value="Tudor_TDRD3"/>
</dbReference>
<dbReference type="InterPro" id="IPR015940">
    <property type="entry name" value="UBA"/>
</dbReference>
<dbReference type="InterPro" id="IPR009060">
    <property type="entry name" value="UBA-like_sf"/>
</dbReference>
<dbReference type="InterPro" id="IPR041915">
    <property type="entry name" value="UBA_TDRD3"/>
</dbReference>
<dbReference type="PANTHER" id="PTHR13681">
    <property type="entry name" value="SURVIVAL OF MOTOR NEURON-RELATED-SPLICING FACTOR 30-RELATED"/>
    <property type="match status" value="1"/>
</dbReference>
<dbReference type="PANTHER" id="PTHR13681:SF24">
    <property type="entry name" value="TUDOR DOMAIN-CONTAINING PROTEIN 3"/>
    <property type="match status" value="1"/>
</dbReference>
<dbReference type="Pfam" id="PF08585">
    <property type="entry name" value="RMI1_N_C"/>
    <property type="match status" value="1"/>
</dbReference>
<dbReference type="Pfam" id="PF00567">
    <property type="entry name" value="TUDOR"/>
    <property type="match status" value="1"/>
</dbReference>
<dbReference type="Pfam" id="PF22562">
    <property type="entry name" value="UBA_7"/>
    <property type="match status" value="1"/>
</dbReference>
<dbReference type="SMART" id="SM01161">
    <property type="entry name" value="DUF1767"/>
    <property type="match status" value="1"/>
</dbReference>
<dbReference type="SMART" id="SM00333">
    <property type="entry name" value="TUDOR"/>
    <property type="match status" value="1"/>
</dbReference>
<dbReference type="SMART" id="SM00165">
    <property type="entry name" value="UBA"/>
    <property type="match status" value="1"/>
</dbReference>
<dbReference type="SUPFAM" id="SSF63748">
    <property type="entry name" value="Tudor/PWWP/MBT"/>
    <property type="match status" value="1"/>
</dbReference>
<dbReference type="SUPFAM" id="SSF46934">
    <property type="entry name" value="UBA-like"/>
    <property type="match status" value="1"/>
</dbReference>
<dbReference type="PROSITE" id="PS50304">
    <property type="entry name" value="TUDOR"/>
    <property type="match status" value="1"/>
</dbReference>
<dbReference type="PROSITE" id="PS50030">
    <property type="entry name" value="UBA"/>
    <property type="match status" value="1"/>
</dbReference>
<gene>
    <name type="primary">Tdrd3</name>
</gene>
<protein>
    <recommendedName>
        <fullName>Tudor domain-containing protein 3</fullName>
    </recommendedName>
</protein>
<comment type="function">
    <text evidence="2">Scaffolding protein that specifically recognizes and binds dimethylarginine-containing proteins. Plays a role in the regulation of translation of target mRNAs by binding Arg/Gly-rich motifs (GAR) in dimethylarginine-containing proteins. In nucleus, acts as a coactivator: recognizes and binds asymmetric dimethylation on the core histone tails associated with transcriptional activation (H3R17me2a and H4R3me2a) and recruits proteins at these arginine-methylated loci. In cytoplasm, acts as an antiviral factor that participates in the assembly of stress granules together with G3BP1.</text>
</comment>
<comment type="subunit">
    <text evidence="2">Component of mRNA stress granules. Interacts with FMR1, FXR1, FXR2, EWSR1, FUS, SERBP1, EEF1A1 and DDX3X or DDX3Y, and with the small nuclear ribonucleoprotein-associated proteins SNRPB and SNRPN. Interacts with 'Lys-48'-linked tetra-ubiquitin, but not with monoubiquitin or 'Lys-63'-linked ubiquitin chains. May interact with the exon junction complex (EJC) composed at least of CASC3, EIF4A3, MAGOH and RBM8A. Interacts with POLR2A (via the C-terminal domain (CTD)).</text>
</comment>
<comment type="subcellular location">
    <subcellularLocation>
        <location evidence="2">Cytoplasm</location>
    </subcellularLocation>
    <subcellularLocation>
        <location evidence="2">Nucleus</location>
    </subcellularLocation>
    <text evidence="2">Predominantly cytoplasmic. Associated with actively translating polyribosomes. Component of stress granules.</text>
</comment>
<comment type="alternative products">
    <event type="alternative splicing"/>
    <isoform>
        <id>Q91W18-1</id>
        <name>1</name>
        <sequence type="displayed"/>
    </isoform>
    <isoform>
        <id>Q91W18-2</id>
        <name>2</name>
        <sequence type="described" ref="VSP_034485"/>
    </isoform>
    <isoform>
        <id>Q91W18-3</id>
        <name>3</name>
        <sequence type="described" ref="VSP_037054"/>
    </isoform>
</comment>
<comment type="domain">
    <text evidence="1">The Tudor domain specifically recognizes and binds asymmetric dimethylation of histone H3 'Arg-17' (H3R17me2a) and histones H4 'Arg-3', 2 tags for epigenetic transcriptional activation.</text>
</comment>
<comment type="sequence caution" evidence="8">
    <conflict type="erroneous initiation">
        <sequence resource="EMBL-CDS" id="AAH05670"/>
    </conflict>
    <text>Truncated N-terminus.</text>
</comment>
<comment type="sequence caution" evidence="8">
    <conflict type="erroneous initiation">
        <sequence resource="EMBL-CDS" id="AAH66144"/>
    </conflict>
    <text>Truncated N-terminus.</text>
</comment>
<comment type="sequence caution" evidence="8">
    <conflict type="erroneous initiation">
        <sequence resource="EMBL-CDS" id="BAC26033"/>
    </conflict>
    <text>Truncated N-terminus.</text>
</comment>
<comment type="sequence caution" evidence="8">
    <conflict type="erroneous initiation">
        <sequence resource="EMBL-CDS" id="BAC28263"/>
    </conflict>
    <text>Truncated N-terminus.</text>
</comment>
<proteinExistence type="evidence at protein level"/>